<evidence type="ECO:0000255" key="1">
    <source>
        <dbReference type="HAMAP-Rule" id="MF_01576"/>
    </source>
</evidence>
<gene>
    <name evidence="1" type="primary">folD</name>
    <name type="ordered locus">Neut_1607</name>
</gene>
<name>FOLD_NITEC</name>
<comment type="function">
    <text evidence="1">Catalyzes the oxidation of 5,10-methylenetetrahydrofolate to 5,10-methenyltetrahydrofolate and then the hydrolysis of 5,10-methenyltetrahydrofolate to 10-formyltetrahydrofolate.</text>
</comment>
<comment type="catalytic activity">
    <reaction evidence="1">
        <text>(6R)-5,10-methylene-5,6,7,8-tetrahydrofolate + NADP(+) = (6R)-5,10-methenyltetrahydrofolate + NADPH</text>
        <dbReference type="Rhea" id="RHEA:22812"/>
        <dbReference type="ChEBI" id="CHEBI:15636"/>
        <dbReference type="ChEBI" id="CHEBI:57455"/>
        <dbReference type="ChEBI" id="CHEBI:57783"/>
        <dbReference type="ChEBI" id="CHEBI:58349"/>
        <dbReference type="EC" id="1.5.1.5"/>
    </reaction>
</comment>
<comment type="catalytic activity">
    <reaction evidence="1">
        <text>(6R)-5,10-methenyltetrahydrofolate + H2O = (6R)-10-formyltetrahydrofolate + H(+)</text>
        <dbReference type="Rhea" id="RHEA:23700"/>
        <dbReference type="ChEBI" id="CHEBI:15377"/>
        <dbReference type="ChEBI" id="CHEBI:15378"/>
        <dbReference type="ChEBI" id="CHEBI:57455"/>
        <dbReference type="ChEBI" id="CHEBI:195366"/>
        <dbReference type="EC" id="3.5.4.9"/>
    </reaction>
</comment>
<comment type="pathway">
    <text evidence="1">One-carbon metabolism; tetrahydrofolate interconversion.</text>
</comment>
<comment type="subunit">
    <text evidence="1">Homodimer.</text>
</comment>
<comment type="similarity">
    <text evidence="1">Belongs to the tetrahydrofolate dehydrogenase/cyclohydrolase family.</text>
</comment>
<feature type="chain" id="PRO_0000305852" description="Bifunctional protein FolD">
    <location>
        <begin position="1"/>
        <end position="295"/>
    </location>
</feature>
<feature type="binding site" evidence="1">
    <location>
        <begin position="165"/>
        <end position="167"/>
    </location>
    <ligand>
        <name>NADP(+)</name>
        <dbReference type="ChEBI" id="CHEBI:58349"/>
    </ligand>
</feature>
<feature type="binding site" evidence="1">
    <location>
        <position position="190"/>
    </location>
    <ligand>
        <name>NADP(+)</name>
        <dbReference type="ChEBI" id="CHEBI:58349"/>
    </ligand>
</feature>
<feature type="binding site" evidence="1">
    <location>
        <position position="231"/>
    </location>
    <ligand>
        <name>NADP(+)</name>
        <dbReference type="ChEBI" id="CHEBI:58349"/>
    </ligand>
</feature>
<dbReference type="EC" id="1.5.1.5" evidence="1"/>
<dbReference type="EC" id="3.5.4.9" evidence="1"/>
<dbReference type="EMBL" id="CP000450">
    <property type="protein sequence ID" value="ABI59850.1"/>
    <property type="molecule type" value="Genomic_DNA"/>
</dbReference>
<dbReference type="RefSeq" id="WP_011634656.1">
    <property type="nucleotide sequence ID" value="NC_008344.1"/>
</dbReference>
<dbReference type="SMR" id="Q0AFN2"/>
<dbReference type="STRING" id="335283.Neut_1607"/>
<dbReference type="KEGG" id="net:Neut_1607"/>
<dbReference type="eggNOG" id="COG0190">
    <property type="taxonomic scope" value="Bacteria"/>
</dbReference>
<dbReference type="HOGENOM" id="CLU_034045_2_1_4"/>
<dbReference type="OrthoDB" id="9803580at2"/>
<dbReference type="UniPathway" id="UPA00193"/>
<dbReference type="Proteomes" id="UP000001966">
    <property type="component" value="Chromosome"/>
</dbReference>
<dbReference type="GO" id="GO:0005829">
    <property type="term" value="C:cytosol"/>
    <property type="evidence" value="ECO:0007669"/>
    <property type="project" value="TreeGrafter"/>
</dbReference>
<dbReference type="GO" id="GO:0004477">
    <property type="term" value="F:methenyltetrahydrofolate cyclohydrolase activity"/>
    <property type="evidence" value="ECO:0007669"/>
    <property type="project" value="UniProtKB-UniRule"/>
</dbReference>
<dbReference type="GO" id="GO:0004488">
    <property type="term" value="F:methylenetetrahydrofolate dehydrogenase (NADP+) activity"/>
    <property type="evidence" value="ECO:0007669"/>
    <property type="project" value="UniProtKB-UniRule"/>
</dbReference>
<dbReference type="GO" id="GO:0000105">
    <property type="term" value="P:L-histidine biosynthetic process"/>
    <property type="evidence" value="ECO:0007669"/>
    <property type="project" value="UniProtKB-KW"/>
</dbReference>
<dbReference type="GO" id="GO:0009086">
    <property type="term" value="P:methionine biosynthetic process"/>
    <property type="evidence" value="ECO:0007669"/>
    <property type="project" value="UniProtKB-KW"/>
</dbReference>
<dbReference type="GO" id="GO:0006164">
    <property type="term" value="P:purine nucleotide biosynthetic process"/>
    <property type="evidence" value="ECO:0007669"/>
    <property type="project" value="UniProtKB-KW"/>
</dbReference>
<dbReference type="GO" id="GO:0035999">
    <property type="term" value="P:tetrahydrofolate interconversion"/>
    <property type="evidence" value="ECO:0007669"/>
    <property type="project" value="UniProtKB-UniRule"/>
</dbReference>
<dbReference type="CDD" id="cd01080">
    <property type="entry name" value="NAD_bind_m-THF_DH_Cyclohyd"/>
    <property type="match status" value="1"/>
</dbReference>
<dbReference type="FunFam" id="3.40.50.720:FF:000094">
    <property type="entry name" value="Bifunctional protein FolD"/>
    <property type="match status" value="1"/>
</dbReference>
<dbReference type="FunFam" id="3.40.50.10860:FF:000005">
    <property type="entry name" value="C-1-tetrahydrofolate synthase, cytoplasmic, putative"/>
    <property type="match status" value="1"/>
</dbReference>
<dbReference type="Gene3D" id="3.40.50.10860">
    <property type="entry name" value="Leucine Dehydrogenase, chain A, domain 1"/>
    <property type="match status" value="1"/>
</dbReference>
<dbReference type="Gene3D" id="3.40.50.720">
    <property type="entry name" value="NAD(P)-binding Rossmann-like Domain"/>
    <property type="match status" value="1"/>
</dbReference>
<dbReference type="HAMAP" id="MF_01576">
    <property type="entry name" value="THF_DHG_CYH"/>
    <property type="match status" value="1"/>
</dbReference>
<dbReference type="InterPro" id="IPR046346">
    <property type="entry name" value="Aminoacid_DH-like_N_sf"/>
</dbReference>
<dbReference type="InterPro" id="IPR036291">
    <property type="entry name" value="NAD(P)-bd_dom_sf"/>
</dbReference>
<dbReference type="InterPro" id="IPR000672">
    <property type="entry name" value="THF_DH/CycHdrlase"/>
</dbReference>
<dbReference type="InterPro" id="IPR020630">
    <property type="entry name" value="THF_DH/CycHdrlase_cat_dom"/>
</dbReference>
<dbReference type="InterPro" id="IPR020867">
    <property type="entry name" value="THF_DH/CycHdrlase_CS"/>
</dbReference>
<dbReference type="InterPro" id="IPR020631">
    <property type="entry name" value="THF_DH/CycHdrlase_NAD-bd_dom"/>
</dbReference>
<dbReference type="NCBIfam" id="NF008058">
    <property type="entry name" value="PRK10792.1"/>
    <property type="match status" value="1"/>
</dbReference>
<dbReference type="NCBIfam" id="NF010783">
    <property type="entry name" value="PRK14186.1"/>
    <property type="match status" value="1"/>
</dbReference>
<dbReference type="NCBIfam" id="NF010786">
    <property type="entry name" value="PRK14189.1"/>
    <property type="match status" value="1"/>
</dbReference>
<dbReference type="PANTHER" id="PTHR48099:SF5">
    <property type="entry name" value="C-1-TETRAHYDROFOLATE SYNTHASE, CYTOPLASMIC"/>
    <property type="match status" value="1"/>
</dbReference>
<dbReference type="PANTHER" id="PTHR48099">
    <property type="entry name" value="C-1-TETRAHYDROFOLATE SYNTHASE, CYTOPLASMIC-RELATED"/>
    <property type="match status" value="1"/>
</dbReference>
<dbReference type="Pfam" id="PF00763">
    <property type="entry name" value="THF_DHG_CYH"/>
    <property type="match status" value="1"/>
</dbReference>
<dbReference type="Pfam" id="PF02882">
    <property type="entry name" value="THF_DHG_CYH_C"/>
    <property type="match status" value="1"/>
</dbReference>
<dbReference type="PRINTS" id="PR00085">
    <property type="entry name" value="THFDHDRGNASE"/>
</dbReference>
<dbReference type="SUPFAM" id="SSF53223">
    <property type="entry name" value="Aminoacid dehydrogenase-like, N-terminal domain"/>
    <property type="match status" value="1"/>
</dbReference>
<dbReference type="SUPFAM" id="SSF51735">
    <property type="entry name" value="NAD(P)-binding Rossmann-fold domains"/>
    <property type="match status" value="1"/>
</dbReference>
<dbReference type="PROSITE" id="PS00767">
    <property type="entry name" value="THF_DHG_CYH_2"/>
    <property type="match status" value="1"/>
</dbReference>
<accession>Q0AFN2</accession>
<proteinExistence type="inferred from homology"/>
<protein>
    <recommendedName>
        <fullName evidence="1">Bifunctional protein FolD</fullName>
    </recommendedName>
    <domain>
        <recommendedName>
            <fullName evidence="1">Methylenetetrahydrofolate dehydrogenase</fullName>
            <ecNumber evidence="1">1.5.1.5</ecNumber>
        </recommendedName>
    </domain>
    <domain>
        <recommendedName>
            <fullName evidence="1">Methenyltetrahydrofolate cyclohydrolase</fullName>
            <ecNumber evidence="1">3.5.4.9</ecNumber>
        </recommendedName>
    </domain>
</protein>
<reference key="1">
    <citation type="journal article" date="2007" name="Environ. Microbiol.">
        <title>Whole-genome analysis of the ammonia-oxidizing bacterium, Nitrosomonas eutropha C91: implications for niche adaptation.</title>
        <authorList>
            <person name="Stein L.Y."/>
            <person name="Arp D.J."/>
            <person name="Berube P.M."/>
            <person name="Chain P.S."/>
            <person name="Hauser L."/>
            <person name="Jetten M.S."/>
            <person name="Klotz M.G."/>
            <person name="Larimer F.W."/>
            <person name="Norton J.M."/>
            <person name="Op den Camp H.J.M."/>
            <person name="Shin M."/>
            <person name="Wei X."/>
        </authorList>
    </citation>
    <scope>NUCLEOTIDE SEQUENCE [LARGE SCALE GENOMIC DNA]</scope>
    <source>
        <strain>DSM 101675 / C91 / Nm57</strain>
    </source>
</reference>
<sequence length="295" mass="31534">MSATIISGNFIASKLREELKQRIRILSETWMQPGLAVILAGDNPASSVYVRNKARTCGELGIHSKVFNFSADTPQKIILRQIQDLNANPEIHGILVQLPLPSHIQMNEVIAAIAIEKDVDGFHPCNVGALATGHALFRPCTPFGVMKMLAEYGIPLQGQHAVVVGRSNIVGKPMALMLLEQGATVTICTSQTRELASHTRSADIIVMATGKANLLTSDMIRTGATVIDVGINRLADGQLCGDVEFSGVKEKAGYITPVPGGVGPMTITMLMNNTIEAAEHAKAKAQIEARCGSMQ</sequence>
<keyword id="KW-0028">Amino-acid biosynthesis</keyword>
<keyword id="KW-0368">Histidine biosynthesis</keyword>
<keyword id="KW-0378">Hydrolase</keyword>
<keyword id="KW-0486">Methionine biosynthesis</keyword>
<keyword id="KW-0511">Multifunctional enzyme</keyword>
<keyword id="KW-0521">NADP</keyword>
<keyword id="KW-0554">One-carbon metabolism</keyword>
<keyword id="KW-0560">Oxidoreductase</keyword>
<keyword id="KW-0658">Purine biosynthesis</keyword>
<organism>
    <name type="scientific">Nitrosomonas eutropha (strain DSM 101675 / C91 / Nm57)</name>
    <dbReference type="NCBI Taxonomy" id="335283"/>
    <lineage>
        <taxon>Bacteria</taxon>
        <taxon>Pseudomonadati</taxon>
        <taxon>Pseudomonadota</taxon>
        <taxon>Betaproteobacteria</taxon>
        <taxon>Nitrosomonadales</taxon>
        <taxon>Nitrosomonadaceae</taxon>
        <taxon>Nitrosomonas</taxon>
    </lineage>
</organism>